<name>RL5_ANOFW</name>
<accession>B7GJ79</accession>
<gene>
    <name evidence="1" type="primary">rplE</name>
    <name type="ordered locus">Aflv_0117</name>
</gene>
<protein>
    <recommendedName>
        <fullName evidence="1">Large ribosomal subunit protein uL5</fullName>
    </recommendedName>
    <alternativeName>
        <fullName evidence="2">50S ribosomal protein L5</fullName>
    </alternativeName>
</protein>
<keyword id="KW-0687">Ribonucleoprotein</keyword>
<keyword id="KW-0689">Ribosomal protein</keyword>
<keyword id="KW-0694">RNA-binding</keyword>
<keyword id="KW-0699">rRNA-binding</keyword>
<keyword id="KW-0820">tRNA-binding</keyword>
<organism>
    <name type="scientific">Anoxybacillus flavithermus (strain DSM 21510 / WK1)</name>
    <dbReference type="NCBI Taxonomy" id="491915"/>
    <lineage>
        <taxon>Bacteria</taxon>
        <taxon>Bacillati</taxon>
        <taxon>Bacillota</taxon>
        <taxon>Bacilli</taxon>
        <taxon>Bacillales</taxon>
        <taxon>Anoxybacillaceae</taxon>
        <taxon>Anoxybacillus</taxon>
    </lineage>
</organism>
<sequence length="179" mass="20185">MNRLKEKYLKEVVPALMSKFNYKSVMQVPKIEKIVINMGVGDAVQNAKALDNAVEELALISGQKPVVTRAKKSIAGFRLREGMPIGAKVTLRGERMYEFFDKLVSVSLPRVRDFRGVSKKSFDGRGNYTLGVKEQLIFPEIDYDKVNKVRGMDIVIVTTAKTDEEARELLTLLGMPFQK</sequence>
<comment type="function">
    <text evidence="1">This is one of the proteins that bind and probably mediate the attachment of the 5S RNA into the large ribosomal subunit, where it forms part of the central protuberance. In the 70S ribosome it contacts protein S13 of the 30S subunit (bridge B1b), connecting the 2 subunits; this bridge is implicated in subunit movement. Contacts the P site tRNA; the 5S rRNA and some of its associated proteins might help stabilize positioning of ribosome-bound tRNAs.</text>
</comment>
<comment type="subunit">
    <text evidence="1">Part of the 50S ribosomal subunit; part of the 5S rRNA/L5/L18/L25 subcomplex. Contacts the 5S rRNA and the P site tRNA. Forms a bridge to the 30S subunit in the 70S ribosome.</text>
</comment>
<comment type="similarity">
    <text evidence="1">Belongs to the universal ribosomal protein uL5 family.</text>
</comment>
<dbReference type="EMBL" id="CP000922">
    <property type="protein sequence ID" value="ACJ32501.1"/>
    <property type="molecule type" value="Genomic_DNA"/>
</dbReference>
<dbReference type="RefSeq" id="WP_012573860.1">
    <property type="nucleotide sequence ID" value="NC_011567.1"/>
</dbReference>
<dbReference type="SMR" id="B7GJ79"/>
<dbReference type="STRING" id="491915.Aflv_0117"/>
<dbReference type="GeneID" id="7036316"/>
<dbReference type="KEGG" id="afl:Aflv_0117"/>
<dbReference type="eggNOG" id="COG0094">
    <property type="taxonomic scope" value="Bacteria"/>
</dbReference>
<dbReference type="HOGENOM" id="CLU_061015_2_1_9"/>
<dbReference type="Proteomes" id="UP000000742">
    <property type="component" value="Chromosome"/>
</dbReference>
<dbReference type="GO" id="GO:1990904">
    <property type="term" value="C:ribonucleoprotein complex"/>
    <property type="evidence" value="ECO:0007669"/>
    <property type="project" value="UniProtKB-KW"/>
</dbReference>
<dbReference type="GO" id="GO:0005840">
    <property type="term" value="C:ribosome"/>
    <property type="evidence" value="ECO:0007669"/>
    <property type="project" value="UniProtKB-KW"/>
</dbReference>
<dbReference type="GO" id="GO:0019843">
    <property type="term" value="F:rRNA binding"/>
    <property type="evidence" value="ECO:0007669"/>
    <property type="project" value="UniProtKB-UniRule"/>
</dbReference>
<dbReference type="GO" id="GO:0003735">
    <property type="term" value="F:structural constituent of ribosome"/>
    <property type="evidence" value="ECO:0007669"/>
    <property type="project" value="InterPro"/>
</dbReference>
<dbReference type="GO" id="GO:0000049">
    <property type="term" value="F:tRNA binding"/>
    <property type="evidence" value="ECO:0007669"/>
    <property type="project" value="UniProtKB-UniRule"/>
</dbReference>
<dbReference type="GO" id="GO:0006412">
    <property type="term" value="P:translation"/>
    <property type="evidence" value="ECO:0007669"/>
    <property type="project" value="UniProtKB-UniRule"/>
</dbReference>
<dbReference type="FunFam" id="3.30.1440.10:FF:000001">
    <property type="entry name" value="50S ribosomal protein L5"/>
    <property type="match status" value="1"/>
</dbReference>
<dbReference type="Gene3D" id="3.30.1440.10">
    <property type="match status" value="1"/>
</dbReference>
<dbReference type="HAMAP" id="MF_01333_B">
    <property type="entry name" value="Ribosomal_uL5_B"/>
    <property type="match status" value="1"/>
</dbReference>
<dbReference type="InterPro" id="IPR002132">
    <property type="entry name" value="Ribosomal_uL5"/>
</dbReference>
<dbReference type="InterPro" id="IPR020930">
    <property type="entry name" value="Ribosomal_uL5_bac-type"/>
</dbReference>
<dbReference type="InterPro" id="IPR031309">
    <property type="entry name" value="Ribosomal_uL5_C"/>
</dbReference>
<dbReference type="InterPro" id="IPR020929">
    <property type="entry name" value="Ribosomal_uL5_CS"/>
</dbReference>
<dbReference type="InterPro" id="IPR022803">
    <property type="entry name" value="Ribosomal_uL5_dom_sf"/>
</dbReference>
<dbReference type="InterPro" id="IPR031310">
    <property type="entry name" value="Ribosomal_uL5_N"/>
</dbReference>
<dbReference type="NCBIfam" id="NF000585">
    <property type="entry name" value="PRK00010.1"/>
    <property type="match status" value="1"/>
</dbReference>
<dbReference type="PANTHER" id="PTHR11994">
    <property type="entry name" value="60S RIBOSOMAL PROTEIN L11-RELATED"/>
    <property type="match status" value="1"/>
</dbReference>
<dbReference type="Pfam" id="PF00281">
    <property type="entry name" value="Ribosomal_L5"/>
    <property type="match status" value="1"/>
</dbReference>
<dbReference type="Pfam" id="PF00673">
    <property type="entry name" value="Ribosomal_L5_C"/>
    <property type="match status" value="1"/>
</dbReference>
<dbReference type="PIRSF" id="PIRSF002161">
    <property type="entry name" value="Ribosomal_L5"/>
    <property type="match status" value="1"/>
</dbReference>
<dbReference type="SUPFAM" id="SSF55282">
    <property type="entry name" value="RL5-like"/>
    <property type="match status" value="1"/>
</dbReference>
<dbReference type="PROSITE" id="PS00358">
    <property type="entry name" value="RIBOSOMAL_L5"/>
    <property type="match status" value="1"/>
</dbReference>
<proteinExistence type="inferred from homology"/>
<evidence type="ECO:0000255" key="1">
    <source>
        <dbReference type="HAMAP-Rule" id="MF_01333"/>
    </source>
</evidence>
<evidence type="ECO:0000305" key="2"/>
<reference key="1">
    <citation type="journal article" date="2008" name="Genome Biol.">
        <title>Encapsulated in silica: genome, proteome and physiology of the thermophilic bacterium Anoxybacillus flavithermus WK1.</title>
        <authorList>
            <person name="Saw J.H."/>
            <person name="Mountain B.W."/>
            <person name="Feng L."/>
            <person name="Omelchenko M.V."/>
            <person name="Hou S."/>
            <person name="Saito J.A."/>
            <person name="Stott M.B."/>
            <person name="Li D."/>
            <person name="Zhao G."/>
            <person name="Wu J."/>
            <person name="Galperin M.Y."/>
            <person name="Koonin E.V."/>
            <person name="Makarova K.S."/>
            <person name="Wolf Y.I."/>
            <person name="Rigden D.J."/>
            <person name="Dunfield P.F."/>
            <person name="Wang L."/>
            <person name="Alam M."/>
        </authorList>
    </citation>
    <scope>NUCLEOTIDE SEQUENCE [LARGE SCALE GENOMIC DNA]</scope>
    <source>
        <strain>DSM 21510 / WK1</strain>
    </source>
</reference>
<feature type="chain" id="PRO_1000142350" description="Large ribosomal subunit protein uL5">
    <location>
        <begin position="1"/>
        <end position="179"/>
    </location>
</feature>